<name>IF3_PROM5</name>
<sequence>MPPRPRFDRRAPVRELPNINERIKYPQLRVVDSDGKQLGVIDRIKALEIANQRELDLVLVSEKANPPVCRIMDYGKYKFEQEKKAKEARKKSHQTEVKEVKMRYKIDKHDYDVRIGQAVRFLKAGDKVKCTVIFRGREIQHSNLAETLLLRMANDLEEQSEVQQRPKREGRNMIMFLSPRKTPLIKKEEDAKENN</sequence>
<protein>
    <recommendedName>
        <fullName evidence="1">Translation initiation factor IF-3</fullName>
    </recommendedName>
</protein>
<comment type="function">
    <text evidence="1">IF-3 binds to the 30S ribosomal subunit and shifts the equilibrium between 70S ribosomes and their 50S and 30S subunits in favor of the free subunits, thus enhancing the availability of 30S subunits on which protein synthesis initiation begins.</text>
</comment>
<comment type="subunit">
    <text evidence="1">Monomer.</text>
</comment>
<comment type="subcellular location">
    <subcellularLocation>
        <location evidence="1">Cytoplasm</location>
    </subcellularLocation>
</comment>
<comment type="similarity">
    <text evidence="1">Belongs to the IF-3 family.</text>
</comment>
<organism>
    <name type="scientific">Prochlorococcus marinus (strain MIT 9515)</name>
    <dbReference type="NCBI Taxonomy" id="167542"/>
    <lineage>
        <taxon>Bacteria</taxon>
        <taxon>Bacillati</taxon>
        <taxon>Cyanobacteriota</taxon>
        <taxon>Cyanophyceae</taxon>
        <taxon>Synechococcales</taxon>
        <taxon>Prochlorococcaceae</taxon>
        <taxon>Prochlorococcus</taxon>
    </lineage>
</organism>
<proteinExistence type="inferred from homology"/>
<dbReference type="EMBL" id="CP000552">
    <property type="protein sequence ID" value="ABM73032.1"/>
    <property type="molecule type" value="Genomic_DNA"/>
</dbReference>
<dbReference type="RefSeq" id="WP_011821117.1">
    <property type="nucleotide sequence ID" value="NC_008817.1"/>
</dbReference>
<dbReference type="SMR" id="A2BZ21"/>
<dbReference type="STRING" id="167542.P9515_18251"/>
<dbReference type="GeneID" id="60201712"/>
<dbReference type="KEGG" id="pmc:P9515_18251"/>
<dbReference type="eggNOG" id="COG0290">
    <property type="taxonomic scope" value="Bacteria"/>
</dbReference>
<dbReference type="HOGENOM" id="CLU_054919_3_2_3"/>
<dbReference type="OrthoDB" id="9806014at2"/>
<dbReference type="Proteomes" id="UP000001589">
    <property type="component" value="Chromosome"/>
</dbReference>
<dbReference type="GO" id="GO:0005829">
    <property type="term" value="C:cytosol"/>
    <property type="evidence" value="ECO:0007669"/>
    <property type="project" value="TreeGrafter"/>
</dbReference>
<dbReference type="GO" id="GO:0016020">
    <property type="term" value="C:membrane"/>
    <property type="evidence" value="ECO:0007669"/>
    <property type="project" value="TreeGrafter"/>
</dbReference>
<dbReference type="GO" id="GO:0043022">
    <property type="term" value="F:ribosome binding"/>
    <property type="evidence" value="ECO:0007669"/>
    <property type="project" value="TreeGrafter"/>
</dbReference>
<dbReference type="GO" id="GO:0003743">
    <property type="term" value="F:translation initiation factor activity"/>
    <property type="evidence" value="ECO:0007669"/>
    <property type="project" value="UniProtKB-UniRule"/>
</dbReference>
<dbReference type="GO" id="GO:0032790">
    <property type="term" value="P:ribosome disassembly"/>
    <property type="evidence" value="ECO:0007669"/>
    <property type="project" value="TreeGrafter"/>
</dbReference>
<dbReference type="FunFam" id="3.10.20.80:FF:000001">
    <property type="entry name" value="Translation initiation factor IF-3"/>
    <property type="match status" value="1"/>
</dbReference>
<dbReference type="FunFam" id="3.30.110.10:FF:000001">
    <property type="entry name" value="Translation initiation factor IF-3"/>
    <property type="match status" value="1"/>
</dbReference>
<dbReference type="Gene3D" id="3.30.110.10">
    <property type="entry name" value="Translation initiation factor 3 (IF-3), C-terminal domain"/>
    <property type="match status" value="1"/>
</dbReference>
<dbReference type="Gene3D" id="3.10.20.80">
    <property type="entry name" value="Translation initiation factor 3 (IF-3), N-terminal domain"/>
    <property type="match status" value="1"/>
</dbReference>
<dbReference type="HAMAP" id="MF_00080">
    <property type="entry name" value="IF_3"/>
    <property type="match status" value="1"/>
</dbReference>
<dbReference type="InterPro" id="IPR036788">
    <property type="entry name" value="T_IF-3_C_sf"/>
</dbReference>
<dbReference type="InterPro" id="IPR036787">
    <property type="entry name" value="T_IF-3_N_sf"/>
</dbReference>
<dbReference type="InterPro" id="IPR019813">
    <property type="entry name" value="Translation_initiation_fac3_CS"/>
</dbReference>
<dbReference type="InterPro" id="IPR001288">
    <property type="entry name" value="Translation_initiation_fac_3"/>
</dbReference>
<dbReference type="InterPro" id="IPR019815">
    <property type="entry name" value="Translation_initiation_fac_3_C"/>
</dbReference>
<dbReference type="InterPro" id="IPR019814">
    <property type="entry name" value="Translation_initiation_fac_3_N"/>
</dbReference>
<dbReference type="NCBIfam" id="TIGR00168">
    <property type="entry name" value="infC"/>
    <property type="match status" value="1"/>
</dbReference>
<dbReference type="PANTHER" id="PTHR10938">
    <property type="entry name" value="TRANSLATION INITIATION FACTOR IF-3"/>
    <property type="match status" value="1"/>
</dbReference>
<dbReference type="PANTHER" id="PTHR10938:SF0">
    <property type="entry name" value="TRANSLATION INITIATION FACTOR IF-3, MITOCHONDRIAL"/>
    <property type="match status" value="1"/>
</dbReference>
<dbReference type="Pfam" id="PF00707">
    <property type="entry name" value="IF3_C"/>
    <property type="match status" value="1"/>
</dbReference>
<dbReference type="Pfam" id="PF05198">
    <property type="entry name" value="IF3_N"/>
    <property type="match status" value="1"/>
</dbReference>
<dbReference type="SUPFAM" id="SSF55200">
    <property type="entry name" value="Translation initiation factor IF3, C-terminal domain"/>
    <property type="match status" value="1"/>
</dbReference>
<dbReference type="SUPFAM" id="SSF54364">
    <property type="entry name" value="Translation initiation factor IF3, N-terminal domain"/>
    <property type="match status" value="1"/>
</dbReference>
<dbReference type="PROSITE" id="PS00938">
    <property type="entry name" value="IF3"/>
    <property type="match status" value="1"/>
</dbReference>
<reference key="1">
    <citation type="journal article" date="2007" name="PLoS Genet.">
        <title>Patterns and implications of gene gain and loss in the evolution of Prochlorococcus.</title>
        <authorList>
            <person name="Kettler G.C."/>
            <person name="Martiny A.C."/>
            <person name="Huang K."/>
            <person name="Zucker J."/>
            <person name="Coleman M.L."/>
            <person name="Rodrigue S."/>
            <person name="Chen F."/>
            <person name="Lapidus A."/>
            <person name="Ferriera S."/>
            <person name="Johnson J."/>
            <person name="Steglich C."/>
            <person name="Church G.M."/>
            <person name="Richardson P."/>
            <person name="Chisholm S.W."/>
        </authorList>
    </citation>
    <scope>NUCLEOTIDE SEQUENCE [LARGE SCALE GENOMIC DNA]</scope>
    <source>
        <strain>MIT 9515</strain>
    </source>
</reference>
<feature type="chain" id="PRO_1000004555" description="Translation initiation factor IF-3">
    <location>
        <begin position="1"/>
        <end position="195"/>
    </location>
</feature>
<feature type="region of interest" description="Disordered" evidence="2">
    <location>
        <begin position="158"/>
        <end position="195"/>
    </location>
</feature>
<feature type="compositionally biased region" description="Basic and acidic residues" evidence="2">
    <location>
        <begin position="185"/>
        <end position="195"/>
    </location>
</feature>
<accession>A2BZ21</accession>
<keyword id="KW-0963">Cytoplasm</keyword>
<keyword id="KW-0396">Initiation factor</keyword>
<keyword id="KW-0648">Protein biosynthesis</keyword>
<evidence type="ECO:0000255" key="1">
    <source>
        <dbReference type="HAMAP-Rule" id="MF_00080"/>
    </source>
</evidence>
<evidence type="ECO:0000256" key="2">
    <source>
        <dbReference type="SAM" id="MobiDB-lite"/>
    </source>
</evidence>
<gene>
    <name evidence="1" type="primary">infC</name>
    <name type="ordered locus">P9515_18251</name>
</gene>